<organism>
    <name type="scientific">Prochlorococcus marinus (strain AS9601)</name>
    <dbReference type="NCBI Taxonomy" id="146891"/>
    <lineage>
        <taxon>Bacteria</taxon>
        <taxon>Bacillati</taxon>
        <taxon>Cyanobacteriota</taxon>
        <taxon>Cyanophyceae</taxon>
        <taxon>Synechococcales</taxon>
        <taxon>Prochlorococcaceae</taxon>
        <taxon>Prochlorococcus</taxon>
    </lineage>
</organism>
<accession>A2BPR7</accession>
<feature type="chain" id="PRO_0000344256" description="NAD(P)H-quinone oxidoreductase subunit 2">
    <location>
        <begin position="1"/>
        <end position="506"/>
    </location>
</feature>
<feature type="transmembrane region" description="Helical" evidence="1">
    <location>
        <begin position="14"/>
        <end position="34"/>
    </location>
</feature>
<feature type="transmembrane region" description="Helical" evidence="1">
    <location>
        <begin position="42"/>
        <end position="62"/>
    </location>
</feature>
<feature type="transmembrane region" description="Helical" evidence="1">
    <location>
        <begin position="79"/>
        <end position="99"/>
    </location>
</feature>
<feature type="transmembrane region" description="Helical" evidence="1">
    <location>
        <begin position="108"/>
        <end position="128"/>
    </location>
</feature>
<feature type="transmembrane region" description="Helical" evidence="1">
    <location>
        <begin position="132"/>
        <end position="152"/>
    </location>
</feature>
<feature type="transmembrane region" description="Helical" evidence="1">
    <location>
        <begin position="167"/>
        <end position="187"/>
    </location>
</feature>
<feature type="transmembrane region" description="Helical" evidence="1">
    <location>
        <begin position="206"/>
        <end position="226"/>
    </location>
</feature>
<feature type="transmembrane region" description="Helical" evidence="1">
    <location>
        <begin position="240"/>
        <end position="260"/>
    </location>
</feature>
<feature type="transmembrane region" description="Helical" evidence="1">
    <location>
        <begin position="276"/>
        <end position="296"/>
    </location>
</feature>
<feature type="transmembrane region" description="Helical" evidence="1">
    <location>
        <begin position="302"/>
        <end position="322"/>
    </location>
</feature>
<feature type="transmembrane region" description="Helical" evidence="1">
    <location>
        <begin position="330"/>
        <end position="350"/>
    </location>
</feature>
<feature type="transmembrane region" description="Helical" evidence="1">
    <location>
        <begin position="374"/>
        <end position="394"/>
    </location>
</feature>
<feature type="transmembrane region" description="Helical" evidence="1">
    <location>
        <begin position="409"/>
        <end position="429"/>
    </location>
</feature>
<protein>
    <recommendedName>
        <fullName evidence="1">NAD(P)H-quinone oxidoreductase subunit 2</fullName>
        <ecNumber evidence="1">7.1.1.-</ecNumber>
    </recommendedName>
    <alternativeName>
        <fullName evidence="1">NAD(P)H dehydrogenase subunit 2</fullName>
    </alternativeName>
    <alternativeName>
        <fullName evidence="1">NADH-plastoquinone oxidoreductase subunit 2</fullName>
    </alternativeName>
    <alternativeName>
        <fullName evidence="1">NDH-1, subunit 2</fullName>
    </alternativeName>
</protein>
<dbReference type="EC" id="7.1.1.-" evidence="1"/>
<dbReference type="EMBL" id="CP000551">
    <property type="protein sequence ID" value="ABM69778.1"/>
    <property type="molecule type" value="Genomic_DNA"/>
</dbReference>
<dbReference type="RefSeq" id="WP_011817946.1">
    <property type="nucleotide sequence ID" value="NC_008816.1"/>
</dbReference>
<dbReference type="SMR" id="A2BPR7"/>
<dbReference type="STRING" id="146891.A9601_04901"/>
<dbReference type="KEGG" id="pmb:A9601_04901"/>
<dbReference type="eggNOG" id="COG1007">
    <property type="taxonomic scope" value="Bacteria"/>
</dbReference>
<dbReference type="HOGENOM" id="CLU_007100_1_2_3"/>
<dbReference type="OrthoDB" id="9811718at2"/>
<dbReference type="Proteomes" id="UP000002590">
    <property type="component" value="Chromosome"/>
</dbReference>
<dbReference type="GO" id="GO:0031676">
    <property type="term" value="C:plasma membrane-derived thylakoid membrane"/>
    <property type="evidence" value="ECO:0007669"/>
    <property type="project" value="UniProtKB-SubCell"/>
</dbReference>
<dbReference type="GO" id="GO:0008137">
    <property type="term" value="F:NADH dehydrogenase (ubiquinone) activity"/>
    <property type="evidence" value="ECO:0007669"/>
    <property type="project" value="InterPro"/>
</dbReference>
<dbReference type="GO" id="GO:0048038">
    <property type="term" value="F:quinone binding"/>
    <property type="evidence" value="ECO:0007669"/>
    <property type="project" value="UniProtKB-KW"/>
</dbReference>
<dbReference type="GO" id="GO:0042773">
    <property type="term" value="P:ATP synthesis coupled electron transport"/>
    <property type="evidence" value="ECO:0007669"/>
    <property type="project" value="InterPro"/>
</dbReference>
<dbReference type="GO" id="GO:0019684">
    <property type="term" value="P:photosynthesis, light reaction"/>
    <property type="evidence" value="ECO:0007669"/>
    <property type="project" value="UniProtKB-UniRule"/>
</dbReference>
<dbReference type="HAMAP" id="MF_00445">
    <property type="entry name" value="NDH1_NuoN_1"/>
    <property type="match status" value="1"/>
</dbReference>
<dbReference type="InterPro" id="IPR010096">
    <property type="entry name" value="NADH-Q_OxRdtase_suN/2"/>
</dbReference>
<dbReference type="InterPro" id="IPR001750">
    <property type="entry name" value="ND/Mrp_TM"/>
</dbReference>
<dbReference type="NCBIfam" id="TIGR01770">
    <property type="entry name" value="NDH_I_N"/>
    <property type="match status" value="1"/>
</dbReference>
<dbReference type="NCBIfam" id="NF002701">
    <property type="entry name" value="PRK02504.1"/>
    <property type="match status" value="1"/>
</dbReference>
<dbReference type="PANTHER" id="PTHR22773">
    <property type="entry name" value="NADH DEHYDROGENASE"/>
    <property type="match status" value="1"/>
</dbReference>
<dbReference type="Pfam" id="PF00361">
    <property type="entry name" value="Proton_antipo_M"/>
    <property type="match status" value="1"/>
</dbReference>
<keyword id="KW-0472">Membrane</keyword>
<keyword id="KW-0520">NAD</keyword>
<keyword id="KW-0521">NADP</keyword>
<keyword id="KW-0618">Plastoquinone</keyword>
<keyword id="KW-0874">Quinone</keyword>
<keyword id="KW-0793">Thylakoid</keyword>
<keyword id="KW-1278">Translocase</keyword>
<keyword id="KW-0812">Transmembrane</keyword>
<keyword id="KW-1133">Transmembrane helix</keyword>
<keyword id="KW-0813">Transport</keyword>
<sequence>MPNEIFTINLNAQAIIPEAFILLGIVGTLLVDLAGEKTASKWAPIICYLSIGSSLVSLALQWSNPVENAFLGSFNSDNLAIAFRAIISLSTLISLLISWRYTEQSGSPIGEFAAIVLSATLGAMLLCGSTDLISVFISLETLSVASYLLSGYLKRDPRSSEAALKYLLVGSAAAAVYLYGSSFLYGLSGSTNLATIGLEIINKPSFITSLALVFVLSTVAFKIAAVPFHQWTPDVYEGSPTPVVAFLSVGSKTAGFAFAIRILSTTFSSFDEEWKLLFTILAILSMALGNVVALAQTSMKRMLAYSSIGQAGFVMIGIVSGTQDGLSAAVLYLAAYLFMNLGAFSCVILFSLRTGSDRILDYSGLYQKDPLITLGLSLCLLSLGGLPPMLGFFGKIYLFFAGWANHQYLLVIVGLVTSVISIYYYISVIKMMVVKEPQEASEIVKSYPEINWGIEGLPPLRIALYTCVAVTALGGILSNPLFKLANTAVSETPFLQDIIAIANNIS</sequence>
<evidence type="ECO:0000255" key="1">
    <source>
        <dbReference type="HAMAP-Rule" id="MF_00445"/>
    </source>
</evidence>
<gene>
    <name evidence="1" type="primary">ndhB</name>
    <name type="ordered locus">A9601_04901</name>
</gene>
<comment type="function">
    <text evidence="1">NDH-1 shuttles electrons from an unknown electron donor, via FMN and iron-sulfur (Fe-S) centers, to quinones in the respiratory and/or the photosynthetic chain. The immediate electron acceptor for the enzyme in this species is believed to be plastoquinone. Couples the redox reaction to proton translocation, and thus conserves the redox energy in a proton gradient. Cyanobacterial NDH-1 also plays a role in inorganic carbon-concentration.</text>
</comment>
<comment type="catalytic activity">
    <reaction evidence="1">
        <text>a plastoquinone + NADH + (n+1) H(+)(in) = a plastoquinol + NAD(+) + n H(+)(out)</text>
        <dbReference type="Rhea" id="RHEA:42608"/>
        <dbReference type="Rhea" id="RHEA-COMP:9561"/>
        <dbReference type="Rhea" id="RHEA-COMP:9562"/>
        <dbReference type="ChEBI" id="CHEBI:15378"/>
        <dbReference type="ChEBI" id="CHEBI:17757"/>
        <dbReference type="ChEBI" id="CHEBI:57540"/>
        <dbReference type="ChEBI" id="CHEBI:57945"/>
        <dbReference type="ChEBI" id="CHEBI:62192"/>
    </reaction>
</comment>
<comment type="catalytic activity">
    <reaction evidence="1">
        <text>a plastoquinone + NADPH + (n+1) H(+)(in) = a plastoquinol + NADP(+) + n H(+)(out)</text>
        <dbReference type="Rhea" id="RHEA:42612"/>
        <dbReference type="Rhea" id="RHEA-COMP:9561"/>
        <dbReference type="Rhea" id="RHEA-COMP:9562"/>
        <dbReference type="ChEBI" id="CHEBI:15378"/>
        <dbReference type="ChEBI" id="CHEBI:17757"/>
        <dbReference type="ChEBI" id="CHEBI:57783"/>
        <dbReference type="ChEBI" id="CHEBI:58349"/>
        <dbReference type="ChEBI" id="CHEBI:62192"/>
    </reaction>
</comment>
<comment type="subunit">
    <text evidence="1">NDH-1 can be composed of about 15 different subunits; different subcomplexes with different compositions have been identified which probably have different functions.</text>
</comment>
<comment type="subcellular location">
    <subcellularLocation>
        <location evidence="1">Cellular thylakoid membrane</location>
        <topology evidence="1">Multi-pass membrane protein</topology>
    </subcellularLocation>
</comment>
<comment type="similarity">
    <text evidence="1">Belongs to the complex I subunit 2 family.</text>
</comment>
<reference key="1">
    <citation type="journal article" date="2007" name="PLoS Genet.">
        <title>Patterns and implications of gene gain and loss in the evolution of Prochlorococcus.</title>
        <authorList>
            <person name="Kettler G.C."/>
            <person name="Martiny A.C."/>
            <person name="Huang K."/>
            <person name="Zucker J."/>
            <person name="Coleman M.L."/>
            <person name="Rodrigue S."/>
            <person name="Chen F."/>
            <person name="Lapidus A."/>
            <person name="Ferriera S."/>
            <person name="Johnson J."/>
            <person name="Steglich C."/>
            <person name="Church G.M."/>
            <person name="Richardson P."/>
            <person name="Chisholm S.W."/>
        </authorList>
    </citation>
    <scope>NUCLEOTIDE SEQUENCE [LARGE SCALE GENOMIC DNA]</scope>
    <source>
        <strain>AS9601</strain>
    </source>
</reference>
<proteinExistence type="inferred from homology"/>
<name>NU2C_PROMS</name>